<evidence type="ECO:0000250" key="1">
    <source>
        <dbReference type="UniProtKB" id="P04177"/>
    </source>
</evidence>
<evidence type="ECO:0000250" key="2">
    <source>
        <dbReference type="UniProtKB" id="P07101"/>
    </source>
</evidence>
<evidence type="ECO:0000256" key="3">
    <source>
        <dbReference type="SAM" id="MobiDB-lite"/>
    </source>
</evidence>
<evidence type="ECO:0000269" key="4">
    <source>
    </source>
</evidence>
<evidence type="ECO:0000269" key="5">
    <source>
    </source>
</evidence>
<evidence type="ECO:0000269" key="6">
    <source>
    </source>
</evidence>
<evidence type="ECO:0000269" key="7">
    <source>
    </source>
</evidence>
<evidence type="ECO:0000305" key="8"/>
<evidence type="ECO:0007744" key="9">
    <source>
    </source>
</evidence>
<comment type="function">
    <text evidence="1 2 6">Catalyzes the conversion of L-tyrosine to L-dihydroxyphenylalanine (L-Dopa), the rate-limiting step in the biosynthesis of catecholamines, dopamine, noradrenaline, and adrenaline. Uses tetrahydrobiopterin and molecular oxygen to convert tyrosine to L-Dopa (By similarity). In addition to tyrosine, is able to catalyze the hydroxylation of phenylalanine and tryptophan with lower specificity (By similarity). Positively regulates the regression of retinal hyaloid vessels during postnatal development (PubMed:30936473).</text>
</comment>
<comment type="catalytic activity">
    <reaction evidence="2">
        <text>(6R)-L-erythro-5,6,7,8-tetrahydrobiopterin + L-tyrosine + O2 = (4aS,6R)-4a-hydroxy-L-erythro-5,6,7,8-tetrahydrobiopterin + L-dopa</text>
        <dbReference type="Rhea" id="RHEA:18201"/>
        <dbReference type="ChEBI" id="CHEBI:15379"/>
        <dbReference type="ChEBI" id="CHEBI:15642"/>
        <dbReference type="ChEBI" id="CHEBI:57504"/>
        <dbReference type="ChEBI" id="CHEBI:58315"/>
        <dbReference type="ChEBI" id="CHEBI:59560"/>
        <dbReference type="EC" id="1.14.16.2"/>
    </reaction>
    <physiologicalReaction direction="left-to-right" evidence="2">
        <dbReference type="Rhea" id="RHEA:18202"/>
    </physiologicalReaction>
</comment>
<comment type="cofactor">
    <cofactor evidence="1">
        <name>Fe(2+)</name>
        <dbReference type="ChEBI" id="CHEBI:29033"/>
    </cofactor>
</comment>
<comment type="activity regulation">
    <text evidence="2">Inhibited in feedback fashion by the catecholamine neurotransmitters, especially by dopamine in competition with tetrahydrobiopterin. Phosphorylation of several Ser/Thr residues in the N-terminus regulates the catalytic activity. Ser-31 and Ser-40 are readily phosphorylated to activate the catalytic activity. A Cysteine modification induced by N-ethylmaleimide (NEM), inhibits tyrosine 3-monooxygenase activity through the modification of the Cys-177.</text>
</comment>
<comment type="pathway">
    <text evidence="2">Catecholamine biosynthesis; dopamine biosynthesis; dopamine from L-tyrosine: step 1/2.</text>
</comment>
<comment type="subunit">
    <text evidence="1 2">Homotetramer. Interacts (when phosphorylated at Ser-19) with YWHAG; one YWHAG dimer bounds to one TH tetramer and this interaction may influence the phosphorylation and dephosphorylation of other sites. Interacts with NT5DC2; the interaction results in reduced phosphorylation and decreased catalytic activity of TH (By similarity).</text>
</comment>
<comment type="subcellular location">
    <subcellularLocation>
        <location evidence="6">Cytoplasm</location>
        <location evidence="6">Perinuclear region</location>
    </subcellularLocation>
    <subcellularLocation>
        <location evidence="1">Nucleus</location>
    </subcellularLocation>
    <subcellularLocation>
        <location evidence="5">Cell projection</location>
        <location evidence="5">Axon</location>
    </subcellularLocation>
    <subcellularLocation>
        <location evidence="1">Cytoplasm</location>
    </subcellularLocation>
    <subcellularLocation>
        <location evidence="1">Cytoplasmic vesicle</location>
        <location evidence="1">Secretory vesicle</location>
        <location evidence="1">Synaptic vesicle</location>
    </subcellularLocation>
    <text evidence="1 5">When phosphorylated at Ser-19 shows a nuclear distribution and when phosphorylated at Ser-31 as well as at Ser-40 shows a cytosolic distribution (By similarity). Expressed in dopaminergic axons and axon terminals (PubMed:17296554).</text>
</comment>
<comment type="tissue specificity">
    <text evidence="4 5 6">Expressed in the adrenal gland (PubMed:1674869). Expressed in the retina (PubMed:30936473). Expressed in the in the striatum (at protein level) (PubMed:17296554).</text>
</comment>
<comment type="developmental stage">
    <text evidence="6">Expressed in the retinal inner nuclear layer and outer nuclear layer at postnatal day 8 (P8) (PubMed:30936473). Expressed in retinal dopaminergic amacrine cells in the retina at P8 and P15 (PubMed:30936473).</text>
</comment>
<comment type="PTM">
    <text evidence="1 2">Phosphorylated on Ser-19, Ser-31 and Ser-40 by several protein kinases with different site specificities. Phosphorylation at Ser-31 and Ser-40 leads to an increase of TH activity. Phosphorylation at Ser-40 activates the enzyme and also counteracts the feedback inhibition of TH by catecholamines (By similarity). Phosphorylation of Ser-19 and Ser-31 triggers the proteasomal degradation of TH through the ubiquitin-proteasome pathway (By similarity). Phosphorylation at Ser-31 facilitates transport of TH from the soma to the nerve terminals via the microtubule network (By similarity). Phosphorylation at Ser-19 induces the high-affinity binding to the 14-3-3 protein YWHAG; this interaction may influence the phosphorylation and dephosphorylation of other sites (By similarity). Ser-19 increases the phosphorylation at Ser-40 in a hierarchical manner, leading to increased activity (By similarity).</text>
</comment>
<comment type="disruption phenotype">
    <text evidence="6 7">Homozygotes deficient mice are deficient in catecholamines, and usually die around embryonic day 11.5-15.5 due to cardiac failure (PubMed:7715703). Increased number of persisting retinal hyaloid vessels due to loss of hyaloid vessel regression at P8 (PubMed:30936473).</text>
</comment>
<comment type="similarity">
    <text evidence="8">Belongs to the biopterin-dependent aromatic amino acid hydroxylase family.</text>
</comment>
<keyword id="KW-0127">Catecholamine biosynthesis</keyword>
<keyword id="KW-0966">Cell projection</keyword>
<keyword id="KW-0963">Cytoplasm</keyword>
<keyword id="KW-0968">Cytoplasmic vesicle</keyword>
<keyword id="KW-0903">Direct protein sequencing</keyword>
<keyword id="KW-0408">Iron</keyword>
<keyword id="KW-0479">Metal-binding</keyword>
<keyword id="KW-0503">Monooxygenase</keyword>
<keyword id="KW-0530">Neurotransmitter biosynthesis</keyword>
<keyword id="KW-0539">Nucleus</keyword>
<keyword id="KW-0560">Oxidoreductase</keyword>
<keyword id="KW-0597">Phosphoprotein</keyword>
<keyword id="KW-1185">Reference proteome</keyword>
<keyword id="KW-0770">Synapse</keyword>
<reference key="1">
    <citation type="journal article" date="1991" name="Biochem. Biophys. Res. Commun.">
        <title>Primary structure of mouse tyrosine hydroxylase deduced from its cDNA.</title>
        <authorList>
            <person name="Ichikawa S."/>
            <person name="Sasaoka T."/>
            <person name="Nagatsu T."/>
        </authorList>
    </citation>
    <scope>NUCLEOTIDE SEQUENCE [MRNA]</scope>
    <scope>TISSUE SPECIFICITY</scope>
</reference>
<reference key="2">
    <citation type="submission" date="1992-04" db="EMBL/GenBank/DDBJ databases">
        <authorList>
            <person name="Morgan W.W."/>
            <person name="Bermudez J."/>
            <person name="Sharp Z.D."/>
        </authorList>
    </citation>
    <scope>NUCLEOTIDE SEQUENCE [GENOMIC RNA] OF 1-30</scope>
    <source>
        <strain>BALB/cJ</strain>
    </source>
</reference>
<reference key="3">
    <citation type="submission" date="2007-07" db="UniProtKB">
        <authorList>
            <person name="Lubec G."/>
            <person name="Yang J.W."/>
            <person name="Zigmond M."/>
        </authorList>
    </citation>
    <scope>PROTEIN SEQUENCE OF 78-90</scope>
    <source>
        <tissue>Brain</tissue>
    </source>
</reference>
<reference key="4">
    <citation type="journal article" date="1995" name="Nature">
        <title>Targeted disruption of the tyrosine hydroxylase gene reveals that catecholamines are required for mouse fetal development.</title>
        <authorList>
            <person name="Zhou Q.Y."/>
            <person name="Quaife C.J."/>
            <person name="Palmiter R.D."/>
        </authorList>
    </citation>
    <scope>DISRUPTION PHENOTYPE</scope>
</reference>
<reference key="5">
    <citation type="journal article" date="2007" name="Neuron">
        <title>Sept4, a component of presynaptic scaffold and Lewy bodies, is required for the suppression of alpha-synuclein neurotoxicity.</title>
        <authorList>
            <person name="Ihara M."/>
            <person name="Yamasaki N."/>
            <person name="Hagiwara A."/>
            <person name="Tanigaki A."/>
            <person name="Kitano A."/>
            <person name="Hikawa R."/>
            <person name="Tomimoto H."/>
            <person name="Noda M."/>
            <person name="Takanashi M."/>
            <person name="Mori H."/>
            <person name="Hattori N."/>
            <person name="Miyakawa T."/>
            <person name="Kinoshita M."/>
        </authorList>
    </citation>
    <scope>SUBCELLULAR LOCATION</scope>
    <scope>TISSUE SPECIFICITY</scope>
</reference>
<reference key="6">
    <citation type="journal article" date="2010" name="Cell">
        <title>A tissue-specific atlas of mouse protein phosphorylation and expression.</title>
        <authorList>
            <person name="Huttlin E.L."/>
            <person name="Jedrychowski M.P."/>
            <person name="Elias J.E."/>
            <person name="Goswami T."/>
            <person name="Rad R."/>
            <person name="Beausoleil S.A."/>
            <person name="Villen J."/>
            <person name="Haas W."/>
            <person name="Sowa M.E."/>
            <person name="Gygi S.P."/>
        </authorList>
    </citation>
    <scope>PHOSPHORYLATION [LARGE SCALE ANALYSIS] AT SER-19; SER-31 AND SER-472</scope>
    <scope>IDENTIFICATION BY MASS SPECTROMETRY [LARGE SCALE ANALYSIS]</scope>
    <source>
        <tissue>Brain</tissue>
        <tissue>Brown adipose tissue</tissue>
    </source>
</reference>
<reference key="7">
    <citation type="journal article" date="2019" name="Nat. Cell Biol.">
        <title>An opsin 5-dopamine pathway mediates light-dependent vascular development in the eye.</title>
        <authorList>
            <person name="Nguyen M.T."/>
            <person name="Vemaraju S."/>
            <person name="Nayak G."/>
            <person name="Odaka Y."/>
            <person name="Buhr E.D."/>
            <person name="Alonzo N."/>
            <person name="Tran U."/>
            <person name="Batie M."/>
            <person name="Upton B.A."/>
            <person name="Darvas M."/>
            <person name="Kozmik Z."/>
            <person name="Rao S."/>
            <person name="Hegde R.S."/>
            <person name="Iuvone P.M."/>
            <person name="Van Gelder R.N."/>
            <person name="Lang R.A."/>
        </authorList>
    </citation>
    <scope>FUNCTION</scope>
    <scope>SUBCELLULAR LOCATION</scope>
    <scope>TISSUE SPECIFICITY</scope>
    <scope>DEVELOPMENTAL STAGE</scope>
    <scope>DISRUPTION PHENOTYPE</scope>
</reference>
<proteinExistence type="evidence at protein level"/>
<dbReference type="EC" id="1.14.16.2" evidence="2"/>
<dbReference type="EMBL" id="M69200">
    <property type="protein sequence ID" value="AAA40434.1"/>
    <property type="molecule type" value="mRNA"/>
</dbReference>
<dbReference type="EMBL" id="X53503">
    <property type="protein sequence ID" value="CAA37580.1"/>
    <property type="molecule type" value="Genomic_DNA"/>
</dbReference>
<dbReference type="CCDS" id="CCDS22036.1"/>
<dbReference type="PIR" id="JN0068">
    <property type="entry name" value="JN0068"/>
</dbReference>
<dbReference type="RefSeq" id="NP_033403.1">
    <property type="nucleotide sequence ID" value="NM_009377.2"/>
</dbReference>
<dbReference type="BMRB" id="P24529"/>
<dbReference type="SMR" id="P24529"/>
<dbReference type="BioGRID" id="204173">
    <property type="interactions" value="3"/>
</dbReference>
<dbReference type="FunCoup" id="P24529">
    <property type="interactions" value="177"/>
</dbReference>
<dbReference type="STRING" id="10090.ENSMUSP00000000219"/>
<dbReference type="GlyGen" id="P24529">
    <property type="glycosylation" value="2 sites, 1 O-linked glycan (1 site)"/>
</dbReference>
<dbReference type="iPTMnet" id="P24529"/>
<dbReference type="PhosphoSitePlus" id="P24529"/>
<dbReference type="PaxDb" id="10090-ENSMUSP00000000219"/>
<dbReference type="PeptideAtlas" id="P24529"/>
<dbReference type="ProteomicsDB" id="298442"/>
<dbReference type="Antibodypedia" id="3748">
    <property type="antibodies" value="1694 antibodies from 49 providers"/>
</dbReference>
<dbReference type="DNASU" id="21823"/>
<dbReference type="Ensembl" id="ENSMUST00000000219.10">
    <property type="protein sequence ID" value="ENSMUSP00000000219.4"/>
    <property type="gene ID" value="ENSMUSG00000000214.12"/>
</dbReference>
<dbReference type="GeneID" id="21823"/>
<dbReference type="KEGG" id="mmu:21823"/>
<dbReference type="UCSC" id="uc009koi.1">
    <property type="organism name" value="mouse"/>
</dbReference>
<dbReference type="AGR" id="MGI:98735"/>
<dbReference type="CTD" id="7054"/>
<dbReference type="MGI" id="MGI:98735">
    <property type="gene designation" value="Th"/>
</dbReference>
<dbReference type="VEuPathDB" id="HostDB:ENSMUSG00000000214"/>
<dbReference type="eggNOG" id="KOG3820">
    <property type="taxonomic scope" value="Eukaryota"/>
</dbReference>
<dbReference type="GeneTree" id="ENSGT00950000182885"/>
<dbReference type="HOGENOM" id="CLU_023198_3_0_1"/>
<dbReference type="InParanoid" id="P24529"/>
<dbReference type="OMA" id="SVEHGYP"/>
<dbReference type="OrthoDB" id="983542at2759"/>
<dbReference type="PhylomeDB" id="P24529"/>
<dbReference type="TreeFam" id="TF313327"/>
<dbReference type="BRENDA" id="1.14.16.2">
    <property type="organism ID" value="3474"/>
</dbReference>
<dbReference type="Reactome" id="R-MMU-209905">
    <property type="pathway name" value="Catecholamine biosynthesis"/>
</dbReference>
<dbReference type="UniPathway" id="UPA00747">
    <property type="reaction ID" value="UER00733"/>
</dbReference>
<dbReference type="BioGRID-ORCS" id="21823">
    <property type="hits" value="1 hit in 79 CRISPR screens"/>
</dbReference>
<dbReference type="ChiTaRS" id="Th">
    <property type="organism name" value="mouse"/>
</dbReference>
<dbReference type="PRO" id="PR:P24529"/>
<dbReference type="Proteomes" id="UP000000589">
    <property type="component" value="Chromosome 7"/>
</dbReference>
<dbReference type="RNAct" id="P24529">
    <property type="molecule type" value="protein"/>
</dbReference>
<dbReference type="Bgee" id="ENSMUSG00000000214">
    <property type="expression patterns" value="Expressed in superior cervical ganglion and 91 other cell types or tissues"/>
</dbReference>
<dbReference type="ExpressionAtlas" id="P24529">
    <property type="expression patterns" value="baseline and differential"/>
</dbReference>
<dbReference type="GO" id="GO:0030424">
    <property type="term" value="C:axon"/>
    <property type="evidence" value="ECO:0000314"/>
    <property type="project" value="MGI"/>
</dbReference>
<dbReference type="GO" id="GO:0005737">
    <property type="term" value="C:cytoplasm"/>
    <property type="evidence" value="ECO:0000314"/>
    <property type="project" value="MGI"/>
</dbReference>
<dbReference type="GO" id="GO:0009898">
    <property type="term" value="C:cytoplasmic side of plasma membrane"/>
    <property type="evidence" value="ECO:0007669"/>
    <property type="project" value="Ensembl"/>
</dbReference>
<dbReference type="GO" id="GO:0033162">
    <property type="term" value="C:melanosome membrane"/>
    <property type="evidence" value="ECO:0007669"/>
    <property type="project" value="Ensembl"/>
</dbReference>
<dbReference type="GO" id="GO:0043005">
    <property type="term" value="C:neuron projection"/>
    <property type="evidence" value="ECO:0000314"/>
    <property type="project" value="MGI"/>
</dbReference>
<dbReference type="GO" id="GO:0005634">
    <property type="term" value="C:nucleus"/>
    <property type="evidence" value="ECO:0000314"/>
    <property type="project" value="MGI"/>
</dbReference>
<dbReference type="GO" id="GO:0043204">
    <property type="term" value="C:perikaryon"/>
    <property type="evidence" value="ECO:0000314"/>
    <property type="project" value="MGI"/>
</dbReference>
<dbReference type="GO" id="GO:0048471">
    <property type="term" value="C:perinuclear region of cytoplasm"/>
    <property type="evidence" value="ECO:0000314"/>
    <property type="project" value="UniProtKB"/>
</dbReference>
<dbReference type="GO" id="GO:0005790">
    <property type="term" value="C:smooth endoplasmic reticulum"/>
    <property type="evidence" value="ECO:0007669"/>
    <property type="project" value="Ensembl"/>
</dbReference>
<dbReference type="GO" id="GO:0008021">
    <property type="term" value="C:synaptic vesicle"/>
    <property type="evidence" value="ECO:0007669"/>
    <property type="project" value="UniProtKB-SubCell"/>
</dbReference>
<dbReference type="GO" id="GO:0019899">
    <property type="term" value="F:enzyme binding"/>
    <property type="evidence" value="ECO:0007669"/>
    <property type="project" value="Ensembl"/>
</dbReference>
<dbReference type="GO" id="GO:0005506">
    <property type="term" value="F:iron ion binding"/>
    <property type="evidence" value="ECO:0007669"/>
    <property type="project" value="InterPro"/>
</dbReference>
<dbReference type="GO" id="GO:0004511">
    <property type="term" value="F:tyrosine 3-monooxygenase activity"/>
    <property type="evidence" value="ECO:0000304"/>
    <property type="project" value="MGI"/>
</dbReference>
<dbReference type="GO" id="GO:0009887">
    <property type="term" value="P:animal organ morphogenesis"/>
    <property type="evidence" value="ECO:0000315"/>
    <property type="project" value="MGI"/>
</dbReference>
<dbReference type="GO" id="GO:0006585">
    <property type="term" value="P:dopamine biosynthetic process from tyrosine"/>
    <property type="evidence" value="ECO:0000314"/>
    <property type="project" value="MGI"/>
</dbReference>
<dbReference type="GO" id="GO:0042755">
    <property type="term" value="P:eating behavior"/>
    <property type="evidence" value="ECO:0000315"/>
    <property type="project" value="MGI"/>
</dbReference>
<dbReference type="GO" id="GO:0048596">
    <property type="term" value="P:embryonic camera-type eye morphogenesis"/>
    <property type="evidence" value="ECO:0000315"/>
    <property type="project" value="BHF-UCL"/>
</dbReference>
<dbReference type="GO" id="GO:0042418">
    <property type="term" value="P:epinephrine biosynthetic process"/>
    <property type="evidence" value="ECO:0007669"/>
    <property type="project" value="Ensembl"/>
</dbReference>
<dbReference type="GO" id="GO:0042462">
    <property type="term" value="P:eye photoreceptor cell development"/>
    <property type="evidence" value="ECO:0000315"/>
    <property type="project" value="BHF-UCL"/>
</dbReference>
<dbReference type="GO" id="GO:0007507">
    <property type="term" value="P:heart development"/>
    <property type="evidence" value="ECO:0000315"/>
    <property type="project" value="MGI"/>
</dbReference>
<dbReference type="GO" id="GO:1990384">
    <property type="term" value="P:hyaloid vascular plexus regression"/>
    <property type="evidence" value="ECO:0000315"/>
    <property type="project" value="UniProtKB"/>
</dbReference>
<dbReference type="GO" id="GO:0007612">
    <property type="term" value="P:learning"/>
    <property type="evidence" value="ECO:0000315"/>
    <property type="project" value="MGI"/>
</dbReference>
<dbReference type="GO" id="GO:0007626">
    <property type="term" value="P:locomotory behavior"/>
    <property type="evidence" value="ECO:0000315"/>
    <property type="project" value="MGI"/>
</dbReference>
<dbReference type="GO" id="GO:0007617">
    <property type="term" value="P:mating behavior"/>
    <property type="evidence" value="ECO:0000315"/>
    <property type="project" value="MGI"/>
</dbReference>
<dbReference type="GO" id="GO:0007613">
    <property type="term" value="P:memory"/>
    <property type="evidence" value="ECO:0000315"/>
    <property type="project" value="MGI"/>
</dbReference>
<dbReference type="GO" id="GO:0042421">
    <property type="term" value="P:norepinephrine biosynthetic process"/>
    <property type="evidence" value="ECO:0007669"/>
    <property type="project" value="Ensembl"/>
</dbReference>
<dbReference type="GO" id="GO:0008016">
    <property type="term" value="P:regulation of heart contraction"/>
    <property type="evidence" value="ECO:0000315"/>
    <property type="project" value="MGI"/>
</dbReference>
<dbReference type="GO" id="GO:0045471">
    <property type="term" value="P:response to ethanol"/>
    <property type="evidence" value="ECO:0007669"/>
    <property type="project" value="Ensembl"/>
</dbReference>
<dbReference type="GO" id="GO:0001666">
    <property type="term" value="P:response to hypoxia"/>
    <property type="evidence" value="ECO:0007669"/>
    <property type="project" value="Ensembl"/>
</dbReference>
<dbReference type="GO" id="GO:0001963">
    <property type="term" value="P:synaptic transmission, dopaminergic"/>
    <property type="evidence" value="ECO:0000315"/>
    <property type="project" value="MGI"/>
</dbReference>
<dbReference type="GO" id="GO:0007601">
    <property type="term" value="P:visual perception"/>
    <property type="evidence" value="ECO:0000315"/>
    <property type="project" value="BHF-UCL"/>
</dbReference>
<dbReference type="CDD" id="cd04930">
    <property type="entry name" value="ACT_TH"/>
    <property type="match status" value="1"/>
</dbReference>
<dbReference type="CDD" id="cd03345">
    <property type="entry name" value="eu_TyrOH"/>
    <property type="match status" value="1"/>
</dbReference>
<dbReference type="FunFam" id="1.10.800.10:FF:000002">
    <property type="entry name" value="Tyrosine 3-monooxygenase"/>
    <property type="match status" value="1"/>
</dbReference>
<dbReference type="FunFam" id="3.30.70.260:FF:000024">
    <property type="entry name" value="Tyrosine 3-monooxygenase"/>
    <property type="match status" value="1"/>
</dbReference>
<dbReference type="Gene3D" id="3.30.70.260">
    <property type="match status" value="1"/>
</dbReference>
<dbReference type="Gene3D" id="1.10.800.10">
    <property type="entry name" value="Aromatic amino acid hydroxylase"/>
    <property type="match status" value="1"/>
</dbReference>
<dbReference type="InterPro" id="IPR045865">
    <property type="entry name" value="ACT-like_dom_sf"/>
</dbReference>
<dbReference type="InterPro" id="IPR001273">
    <property type="entry name" value="ArAA_hydroxylase"/>
</dbReference>
<dbReference type="InterPro" id="IPR018301">
    <property type="entry name" value="ArAA_hydroxylase_Fe/CU_BS"/>
</dbReference>
<dbReference type="InterPro" id="IPR036951">
    <property type="entry name" value="ArAA_hydroxylase_sf"/>
</dbReference>
<dbReference type="InterPro" id="IPR036329">
    <property type="entry name" value="Aro-AA_hydroxylase_C_sf"/>
</dbReference>
<dbReference type="InterPro" id="IPR019774">
    <property type="entry name" value="Aromatic-AA_hydroxylase_C"/>
</dbReference>
<dbReference type="InterPro" id="IPR041903">
    <property type="entry name" value="Eu_TyrOH_cat"/>
</dbReference>
<dbReference type="InterPro" id="IPR049321">
    <property type="entry name" value="TH_ACT"/>
</dbReference>
<dbReference type="InterPro" id="IPR005962">
    <property type="entry name" value="Tyr_3_mOase"/>
</dbReference>
<dbReference type="InterPro" id="IPR019773">
    <property type="entry name" value="Tyrosine_3-monooxygenase-like"/>
</dbReference>
<dbReference type="InterPro" id="IPR021164">
    <property type="entry name" value="Tyrosine_hydroxylase_CS"/>
</dbReference>
<dbReference type="NCBIfam" id="TIGR01269">
    <property type="entry name" value="Tyr_3_monoox"/>
    <property type="match status" value="1"/>
</dbReference>
<dbReference type="PANTHER" id="PTHR11473">
    <property type="entry name" value="AROMATIC AMINO ACID HYDROXYLASE"/>
    <property type="match status" value="1"/>
</dbReference>
<dbReference type="PANTHER" id="PTHR11473:SF18">
    <property type="entry name" value="TYROSINE 3-MONOOXYGENASE"/>
    <property type="match status" value="1"/>
</dbReference>
<dbReference type="Pfam" id="PF00351">
    <property type="entry name" value="Biopterin_H"/>
    <property type="match status" value="1"/>
</dbReference>
<dbReference type="Pfam" id="PF21417">
    <property type="entry name" value="TH_ACT"/>
    <property type="match status" value="1"/>
</dbReference>
<dbReference type="Pfam" id="PF12549">
    <property type="entry name" value="TOH_N"/>
    <property type="match status" value="2"/>
</dbReference>
<dbReference type="PIRSF" id="PIRSF000336">
    <property type="entry name" value="TH"/>
    <property type="match status" value="1"/>
</dbReference>
<dbReference type="PRINTS" id="PR00372">
    <property type="entry name" value="FYWHYDRXLASE"/>
</dbReference>
<dbReference type="SUPFAM" id="SSF55021">
    <property type="entry name" value="ACT-like"/>
    <property type="match status" value="1"/>
</dbReference>
<dbReference type="SUPFAM" id="SSF56534">
    <property type="entry name" value="Aromatic aminoacid monoxygenases, catalytic and oligomerization domains"/>
    <property type="match status" value="1"/>
</dbReference>
<dbReference type="PROSITE" id="PS00367">
    <property type="entry name" value="BH4_AAA_HYDROXYL_1"/>
    <property type="match status" value="1"/>
</dbReference>
<dbReference type="PROSITE" id="PS51410">
    <property type="entry name" value="BH4_AAA_HYDROXYL_2"/>
    <property type="match status" value="1"/>
</dbReference>
<gene>
    <name type="primary">Th</name>
</gene>
<feature type="chain" id="PRO_0000205562" description="Tyrosine 3-monooxygenase">
    <location>
        <begin position="1"/>
        <end position="498"/>
    </location>
</feature>
<feature type="region of interest" description="Disordered" evidence="3">
    <location>
        <begin position="1"/>
        <end position="33"/>
    </location>
</feature>
<feature type="compositionally biased region" description="Polar residues" evidence="3">
    <location>
        <begin position="1"/>
        <end position="10"/>
    </location>
</feature>
<feature type="binding site" evidence="2">
    <location>
        <position position="331"/>
    </location>
    <ligand>
        <name>Fe cation</name>
        <dbReference type="ChEBI" id="CHEBI:24875"/>
    </ligand>
</feature>
<feature type="binding site" evidence="2">
    <location>
        <position position="336"/>
    </location>
    <ligand>
        <name>Fe cation</name>
        <dbReference type="ChEBI" id="CHEBI:24875"/>
    </ligand>
</feature>
<feature type="binding site" evidence="2">
    <location>
        <position position="376"/>
    </location>
    <ligand>
        <name>Fe cation</name>
        <dbReference type="ChEBI" id="CHEBI:24875"/>
    </ligand>
</feature>
<feature type="site" description="Important for substrate specificity" evidence="1">
    <location>
        <position position="425"/>
    </location>
</feature>
<feature type="modified residue" description="Phosphoserine" evidence="9">
    <location>
        <position position="19"/>
    </location>
</feature>
<feature type="modified residue" description="Phosphoserine" evidence="9">
    <location>
        <position position="31"/>
    </location>
</feature>
<feature type="modified residue" description="Phosphoserine; by CaMK2 and PKA" evidence="2">
    <location>
        <position position="40"/>
    </location>
</feature>
<feature type="modified residue" description="Phosphoserine" evidence="9">
    <location>
        <position position="472"/>
    </location>
</feature>
<name>TY3H_MOUSE</name>
<accession>P24529</accession>
<protein>
    <recommendedName>
        <fullName>Tyrosine 3-monooxygenase</fullName>
        <ecNumber evidence="2">1.14.16.2</ecNumber>
    </recommendedName>
    <alternativeName>
        <fullName>Tyrosine 3-hydroxylase</fullName>
        <shortName>TH</shortName>
    </alternativeName>
</protein>
<organism>
    <name type="scientific">Mus musculus</name>
    <name type="common">Mouse</name>
    <dbReference type="NCBI Taxonomy" id="10090"/>
    <lineage>
        <taxon>Eukaryota</taxon>
        <taxon>Metazoa</taxon>
        <taxon>Chordata</taxon>
        <taxon>Craniata</taxon>
        <taxon>Vertebrata</taxon>
        <taxon>Euteleostomi</taxon>
        <taxon>Mammalia</taxon>
        <taxon>Eutheria</taxon>
        <taxon>Euarchontoglires</taxon>
        <taxon>Glires</taxon>
        <taxon>Rodentia</taxon>
        <taxon>Myomorpha</taxon>
        <taxon>Muroidea</taxon>
        <taxon>Muridae</taxon>
        <taxon>Murinae</taxon>
        <taxon>Mus</taxon>
        <taxon>Mus</taxon>
    </lineage>
</organism>
<sequence length="498" mass="55993">MPTPSASSPQPKGFRRAVSEQDTKQAEAVTSPRFIGRRQSLIEDARKEREAAAAAAAAAVASAEPGNPLEAVVFEERDGNAVLNLLFSLRGTKPSSLSRALKVFETFEAKIHHLETRPAQRPLAGSPHLEYFVRFEVPSGDLAALLSSVRRVSDDVRSAREDKVPWFPRKVSELDKCHHLVTKFDPDLDLDHPGFSDQAYRQRRKLIAEIAFQYKQGEPIPHVEYTKEEIATWKEVYATLKGLYATHACREHLEAFQLLERYCGYREDSIPQLEDVSHFLKERTGFQLRPVAGLLSARDFLASLAFRVFQCTQYIRHASSPMHSPEPDCCHELLGHVPMLADRTFAQFSQDIGLASLGASDEEIEKLSTVYWFTVEFGLCKQNGELKAYGAGLLSSYGELLHSLSEEPEVRAFDPDTAAVQPYQDQTYQPVYFVSESFSDAKDKLRNYASRIQRPFSVKFDPYTLAIDVLDSPHTIRRSLEGVQDELHTLTQALSAIS</sequence>